<comment type="similarity">
    <text evidence="1">Belongs to the universal ribosomal protein uS2 family.</text>
</comment>
<gene>
    <name evidence="1" type="primary">rpsB</name>
    <name type="ordered locus">MGAS10750_Spy1872</name>
</gene>
<evidence type="ECO:0000255" key="1">
    <source>
        <dbReference type="HAMAP-Rule" id="MF_00291"/>
    </source>
</evidence>
<evidence type="ECO:0000305" key="2"/>
<keyword id="KW-0687">Ribonucleoprotein</keyword>
<keyword id="KW-0689">Ribosomal protein</keyword>
<name>RS2_STRPF</name>
<sequence>MAVISMKQLLEAGVHFGHQTRRWNPKMAKYIFTERNGIHVIDLQQTVKLADQAYEFVRDAAANDAVILFVGTKKQAAEAVADEATRAGQYFINHRWLGGTLTNWGTIQKRIARLKEIKRMEEEGTFDVLPKKEVALLNKQRARLEKFLGGIEDMPRIPDVMYVVDPHKEQIAVKEAKKLGIPVVAMVDTNADPDDIDIIIPANDDAIRAVKLITAKLADAIIEGRQGEDADVAFEADTQADSIEEIVEVVEGDNA</sequence>
<proteinExistence type="inferred from homology"/>
<organism>
    <name type="scientific">Streptococcus pyogenes serotype M4 (strain MGAS10750)</name>
    <dbReference type="NCBI Taxonomy" id="370554"/>
    <lineage>
        <taxon>Bacteria</taxon>
        <taxon>Bacillati</taxon>
        <taxon>Bacillota</taxon>
        <taxon>Bacilli</taxon>
        <taxon>Lactobacillales</taxon>
        <taxon>Streptococcaceae</taxon>
        <taxon>Streptococcus</taxon>
    </lineage>
</organism>
<protein>
    <recommendedName>
        <fullName evidence="1">Small ribosomal subunit protein uS2</fullName>
    </recommendedName>
    <alternativeName>
        <fullName evidence="2">30S ribosomal protein S2</fullName>
    </alternativeName>
</protein>
<accession>Q1J4B4</accession>
<reference key="1">
    <citation type="journal article" date="2006" name="Proc. Natl. Acad. Sci. U.S.A.">
        <title>Molecular genetic anatomy of inter- and intraserotype variation in the human bacterial pathogen group A Streptococcus.</title>
        <authorList>
            <person name="Beres S.B."/>
            <person name="Richter E.W."/>
            <person name="Nagiec M.J."/>
            <person name="Sumby P."/>
            <person name="Porcella S.F."/>
            <person name="DeLeo F.R."/>
            <person name="Musser J.M."/>
        </authorList>
    </citation>
    <scope>NUCLEOTIDE SEQUENCE [LARGE SCALE GENOMIC DNA]</scope>
    <source>
        <strain>MGAS10750</strain>
    </source>
</reference>
<feature type="chain" id="PRO_1000004090" description="Small ribosomal subunit protein uS2">
    <location>
        <begin position="1"/>
        <end position="255"/>
    </location>
</feature>
<dbReference type="EMBL" id="CP000262">
    <property type="protein sequence ID" value="ABF38822.1"/>
    <property type="molecule type" value="Genomic_DNA"/>
</dbReference>
<dbReference type="SMR" id="Q1J4B4"/>
<dbReference type="KEGG" id="spi:MGAS10750_Spy1872"/>
<dbReference type="HOGENOM" id="CLU_040318_1_2_9"/>
<dbReference type="Proteomes" id="UP000002434">
    <property type="component" value="Chromosome"/>
</dbReference>
<dbReference type="GO" id="GO:0022627">
    <property type="term" value="C:cytosolic small ribosomal subunit"/>
    <property type="evidence" value="ECO:0007669"/>
    <property type="project" value="TreeGrafter"/>
</dbReference>
<dbReference type="GO" id="GO:0003735">
    <property type="term" value="F:structural constituent of ribosome"/>
    <property type="evidence" value="ECO:0007669"/>
    <property type="project" value="InterPro"/>
</dbReference>
<dbReference type="GO" id="GO:0006412">
    <property type="term" value="P:translation"/>
    <property type="evidence" value="ECO:0007669"/>
    <property type="project" value="UniProtKB-UniRule"/>
</dbReference>
<dbReference type="CDD" id="cd01425">
    <property type="entry name" value="RPS2"/>
    <property type="match status" value="1"/>
</dbReference>
<dbReference type="FunFam" id="1.10.287.610:FF:000001">
    <property type="entry name" value="30S ribosomal protein S2"/>
    <property type="match status" value="1"/>
</dbReference>
<dbReference type="Gene3D" id="3.40.50.10490">
    <property type="entry name" value="Glucose-6-phosphate isomerase like protein, domain 1"/>
    <property type="match status" value="1"/>
</dbReference>
<dbReference type="Gene3D" id="1.10.287.610">
    <property type="entry name" value="Helix hairpin bin"/>
    <property type="match status" value="1"/>
</dbReference>
<dbReference type="HAMAP" id="MF_00291_B">
    <property type="entry name" value="Ribosomal_uS2_B"/>
    <property type="match status" value="1"/>
</dbReference>
<dbReference type="InterPro" id="IPR001865">
    <property type="entry name" value="Ribosomal_uS2"/>
</dbReference>
<dbReference type="InterPro" id="IPR005706">
    <property type="entry name" value="Ribosomal_uS2_bac/mit/plastid"/>
</dbReference>
<dbReference type="InterPro" id="IPR018130">
    <property type="entry name" value="Ribosomal_uS2_CS"/>
</dbReference>
<dbReference type="InterPro" id="IPR023591">
    <property type="entry name" value="Ribosomal_uS2_flav_dom_sf"/>
</dbReference>
<dbReference type="NCBIfam" id="TIGR01011">
    <property type="entry name" value="rpsB_bact"/>
    <property type="match status" value="1"/>
</dbReference>
<dbReference type="PANTHER" id="PTHR12534">
    <property type="entry name" value="30S RIBOSOMAL PROTEIN S2 PROKARYOTIC AND ORGANELLAR"/>
    <property type="match status" value="1"/>
</dbReference>
<dbReference type="PANTHER" id="PTHR12534:SF0">
    <property type="entry name" value="SMALL RIBOSOMAL SUBUNIT PROTEIN US2M"/>
    <property type="match status" value="1"/>
</dbReference>
<dbReference type="Pfam" id="PF00318">
    <property type="entry name" value="Ribosomal_S2"/>
    <property type="match status" value="1"/>
</dbReference>
<dbReference type="PRINTS" id="PR00395">
    <property type="entry name" value="RIBOSOMALS2"/>
</dbReference>
<dbReference type="SUPFAM" id="SSF52313">
    <property type="entry name" value="Ribosomal protein S2"/>
    <property type="match status" value="1"/>
</dbReference>
<dbReference type="PROSITE" id="PS00962">
    <property type="entry name" value="RIBOSOMAL_S2_1"/>
    <property type="match status" value="1"/>
</dbReference>